<feature type="chain" id="PRO_0000176548" description="Transcription antitermination protein NusB">
    <location>
        <begin position="1"/>
        <end position="139"/>
    </location>
</feature>
<organism>
    <name type="scientific">Lactiplantibacillus plantarum (strain ATCC BAA-793 / NCIMB 8826 / WCFS1)</name>
    <name type="common">Lactobacillus plantarum</name>
    <dbReference type="NCBI Taxonomy" id="220668"/>
    <lineage>
        <taxon>Bacteria</taxon>
        <taxon>Bacillati</taxon>
        <taxon>Bacillota</taxon>
        <taxon>Bacilli</taxon>
        <taxon>Lactobacillales</taxon>
        <taxon>Lactobacillaceae</taxon>
        <taxon>Lactiplantibacillus</taxon>
    </lineage>
</organism>
<accession>Q88WM9</accession>
<accession>F9UNX3</accession>
<evidence type="ECO:0000255" key="1">
    <source>
        <dbReference type="HAMAP-Rule" id="MF_00073"/>
    </source>
</evidence>
<keyword id="KW-1185">Reference proteome</keyword>
<keyword id="KW-0694">RNA-binding</keyword>
<keyword id="KW-0804">Transcription</keyword>
<keyword id="KW-0889">Transcription antitermination</keyword>
<keyword id="KW-0805">Transcription regulation</keyword>
<proteinExistence type="inferred from homology"/>
<protein>
    <recommendedName>
        <fullName evidence="1">Transcription antitermination protein NusB</fullName>
    </recommendedName>
    <alternativeName>
        <fullName evidence="1">Antitermination factor NusB</fullName>
    </alternativeName>
</protein>
<gene>
    <name evidence="1" type="primary">nusB</name>
    <name type="ordered locus">lp_1598</name>
</gene>
<sequence length="139" mass="15758">MSLTRHEIREKAFQALFALNANPDADENQLFQQLLNPEETDAVEIPAYLSTLVTGVREHQVELDAQIQPYLSQKWSLDRLAKTDLIILRIAFFELQFVDDVPTKVAVNEAIELTKAFSDDRSRKFVSGVLGKVVKNQAN</sequence>
<dbReference type="EMBL" id="AL935263">
    <property type="protein sequence ID" value="CCC78912.1"/>
    <property type="molecule type" value="Genomic_DNA"/>
</dbReference>
<dbReference type="RefSeq" id="WP_011101470.1">
    <property type="nucleotide sequence ID" value="NC_004567.2"/>
</dbReference>
<dbReference type="RefSeq" id="YP_004889426.1">
    <property type="nucleotide sequence ID" value="NC_004567.2"/>
</dbReference>
<dbReference type="SMR" id="Q88WM9"/>
<dbReference type="STRING" id="220668.lp_1598"/>
<dbReference type="EnsemblBacteria" id="CCC78912">
    <property type="protein sequence ID" value="CCC78912"/>
    <property type="gene ID" value="lp_1598"/>
</dbReference>
<dbReference type="KEGG" id="lpl:lp_1598"/>
<dbReference type="PATRIC" id="fig|220668.9.peg.1347"/>
<dbReference type="eggNOG" id="COG0781">
    <property type="taxonomic scope" value="Bacteria"/>
</dbReference>
<dbReference type="HOGENOM" id="CLU_087843_3_2_9"/>
<dbReference type="OrthoDB" id="9811381at2"/>
<dbReference type="PhylomeDB" id="Q88WM9"/>
<dbReference type="Proteomes" id="UP000000432">
    <property type="component" value="Chromosome"/>
</dbReference>
<dbReference type="GO" id="GO:0005829">
    <property type="term" value="C:cytosol"/>
    <property type="evidence" value="ECO:0007669"/>
    <property type="project" value="TreeGrafter"/>
</dbReference>
<dbReference type="GO" id="GO:0003723">
    <property type="term" value="F:RNA binding"/>
    <property type="evidence" value="ECO:0007669"/>
    <property type="project" value="UniProtKB-UniRule"/>
</dbReference>
<dbReference type="GO" id="GO:0006353">
    <property type="term" value="P:DNA-templated transcription termination"/>
    <property type="evidence" value="ECO:0007669"/>
    <property type="project" value="UniProtKB-UniRule"/>
</dbReference>
<dbReference type="GO" id="GO:0031564">
    <property type="term" value="P:transcription antitermination"/>
    <property type="evidence" value="ECO:0007669"/>
    <property type="project" value="UniProtKB-KW"/>
</dbReference>
<dbReference type="Gene3D" id="1.10.940.10">
    <property type="entry name" value="NusB-like"/>
    <property type="match status" value="1"/>
</dbReference>
<dbReference type="HAMAP" id="MF_00073">
    <property type="entry name" value="NusB"/>
    <property type="match status" value="1"/>
</dbReference>
<dbReference type="InterPro" id="IPR035926">
    <property type="entry name" value="NusB-like_sf"/>
</dbReference>
<dbReference type="InterPro" id="IPR011605">
    <property type="entry name" value="NusB_fam"/>
</dbReference>
<dbReference type="InterPro" id="IPR006027">
    <property type="entry name" value="NusB_RsmB_TIM44"/>
</dbReference>
<dbReference type="NCBIfam" id="TIGR01951">
    <property type="entry name" value="nusB"/>
    <property type="match status" value="1"/>
</dbReference>
<dbReference type="NCBIfam" id="NF001223">
    <property type="entry name" value="PRK00202.1-1"/>
    <property type="match status" value="1"/>
</dbReference>
<dbReference type="PANTHER" id="PTHR11078:SF3">
    <property type="entry name" value="ANTITERMINATION NUSB DOMAIN-CONTAINING PROTEIN"/>
    <property type="match status" value="1"/>
</dbReference>
<dbReference type="PANTHER" id="PTHR11078">
    <property type="entry name" value="N UTILIZATION SUBSTANCE PROTEIN B-RELATED"/>
    <property type="match status" value="1"/>
</dbReference>
<dbReference type="Pfam" id="PF01029">
    <property type="entry name" value="NusB"/>
    <property type="match status" value="1"/>
</dbReference>
<dbReference type="SUPFAM" id="SSF48013">
    <property type="entry name" value="NusB-like"/>
    <property type="match status" value="1"/>
</dbReference>
<name>NUSB_LACPL</name>
<comment type="function">
    <text evidence="1">Involved in transcription antitermination. Required for transcription of ribosomal RNA (rRNA) genes. Binds specifically to the boxA antiterminator sequence of the ribosomal RNA (rrn) operons.</text>
</comment>
<comment type="similarity">
    <text evidence="1">Belongs to the NusB family.</text>
</comment>
<reference key="1">
    <citation type="journal article" date="2003" name="Proc. Natl. Acad. Sci. U.S.A.">
        <title>Complete genome sequence of Lactobacillus plantarum WCFS1.</title>
        <authorList>
            <person name="Kleerebezem M."/>
            <person name="Boekhorst J."/>
            <person name="van Kranenburg R."/>
            <person name="Molenaar D."/>
            <person name="Kuipers O.P."/>
            <person name="Leer R."/>
            <person name="Tarchini R."/>
            <person name="Peters S.A."/>
            <person name="Sandbrink H.M."/>
            <person name="Fiers M.W.E.J."/>
            <person name="Stiekema W."/>
            <person name="Klein Lankhorst R.M."/>
            <person name="Bron P.A."/>
            <person name="Hoffer S.M."/>
            <person name="Nierop Groot M.N."/>
            <person name="Kerkhoven R."/>
            <person name="De Vries M."/>
            <person name="Ursing B."/>
            <person name="De Vos W.M."/>
            <person name="Siezen R.J."/>
        </authorList>
    </citation>
    <scope>NUCLEOTIDE SEQUENCE [LARGE SCALE GENOMIC DNA]</scope>
    <source>
        <strain>ATCC BAA-793 / NCIMB 8826 / WCFS1</strain>
    </source>
</reference>
<reference key="2">
    <citation type="journal article" date="2012" name="J. Bacteriol.">
        <title>Complete resequencing and reannotation of the Lactobacillus plantarum WCFS1 genome.</title>
        <authorList>
            <person name="Siezen R.J."/>
            <person name="Francke C."/>
            <person name="Renckens B."/>
            <person name="Boekhorst J."/>
            <person name="Wels M."/>
            <person name="Kleerebezem M."/>
            <person name="van Hijum S.A."/>
        </authorList>
    </citation>
    <scope>NUCLEOTIDE SEQUENCE [LARGE SCALE GENOMIC DNA]</scope>
    <scope>GENOME REANNOTATION</scope>
    <source>
        <strain>ATCC BAA-793 / NCIMB 8826 / WCFS1</strain>
    </source>
</reference>